<keyword id="KW-0934">Plastid</keyword>
<keyword id="KW-0687">Ribonucleoprotein</keyword>
<keyword id="KW-0689">Ribosomal protein</keyword>
<comment type="subcellular location">
    <subcellularLocation>
        <location>Plastid</location>
    </subcellularLocation>
</comment>
<comment type="similarity">
    <text evidence="1">Belongs to the bacterial ribosomal protein bL36 family.</text>
</comment>
<name>RK36_EUGLO</name>
<evidence type="ECO:0000305" key="1"/>
<dbReference type="EMBL" id="AJ294725">
    <property type="protein sequence ID" value="CAC24578.1"/>
    <property type="molecule type" value="Genomic_DNA"/>
</dbReference>
<dbReference type="PIR" id="S14152">
    <property type="entry name" value="R5IT36"/>
</dbReference>
<dbReference type="RefSeq" id="NP_074967.1">
    <property type="nucleotide sequence ID" value="NC_002652.1"/>
</dbReference>
<dbReference type="SMR" id="P24355"/>
<dbReference type="GeneID" id="802520"/>
<dbReference type="GO" id="GO:0009536">
    <property type="term" value="C:plastid"/>
    <property type="evidence" value="ECO:0007669"/>
    <property type="project" value="UniProtKB-SubCell"/>
</dbReference>
<dbReference type="GO" id="GO:1990904">
    <property type="term" value="C:ribonucleoprotein complex"/>
    <property type="evidence" value="ECO:0007669"/>
    <property type="project" value="UniProtKB-KW"/>
</dbReference>
<dbReference type="GO" id="GO:0005840">
    <property type="term" value="C:ribosome"/>
    <property type="evidence" value="ECO:0007669"/>
    <property type="project" value="UniProtKB-KW"/>
</dbReference>
<dbReference type="GO" id="GO:0003735">
    <property type="term" value="F:structural constituent of ribosome"/>
    <property type="evidence" value="ECO:0007669"/>
    <property type="project" value="InterPro"/>
</dbReference>
<dbReference type="GO" id="GO:0006412">
    <property type="term" value="P:translation"/>
    <property type="evidence" value="ECO:0007669"/>
    <property type="project" value="InterPro"/>
</dbReference>
<dbReference type="HAMAP" id="MF_00251">
    <property type="entry name" value="Ribosomal_bL36"/>
    <property type="match status" value="1"/>
</dbReference>
<dbReference type="InterPro" id="IPR000473">
    <property type="entry name" value="Ribosomal_bL36"/>
</dbReference>
<dbReference type="InterPro" id="IPR035977">
    <property type="entry name" value="Ribosomal_bL36_sp"/>
</dbReference>
<dbReference type="NCBIfam" id="TIGR01022">
    <property type="entry name" value="rpmJ_bact"/>
    <property type="match status" value="1"/>
</dbReference>
<dbReference type="PANTHER" id="PTHR42888">
    <property type="entry name" value="50S RIBOSOMAL PROTEIN L36, CHLOROPLASTIC"/>
    <property type="match status" value="1"/>
</dbReference>
<dbReference type="PANTHER" id="PTHR42888:SF1">
    <property type="entry name" value="LARGE RIBOSOMAL SUBUNIT PROTEIN BL36C"/>
    <property type="match status" value="1"/>
</dbReference>
<dbReference type="Pfam" id="PF00444">
    <property type="entry name" value="Ribosomal_L36"/>
    <property type="match status" value="1"/>
</dbReference>
<dbReference type="SUPFAM" id="SSF57840">
    <property type="entry name" value="Ribosomal protein L36"/>
    <property type="match status" value="1"/>
</dbReference>
<dbReference type="PROSITE" id="PS00828">
    <property type="entry name" value="RIBOSOMAL_L36"/>
    <property type="match status" value="1"/>
</dbReference>
<organism>
    <name type="scientific">Euglena longa</name>
    <name type="common">Euglenophycean alga</name>
    <name type="synonym">Astasia longa</name>
    <dbReference type="NCBI Taxonomy" id="3037"/>
    <lineage>
        <taxon>Eukaryota</taxon>
        <taxon>Discoba</taxon>
        <taxon>Euglenozoa</taxon>
        <taxon>Euglenida</taxon>
        <taxon>Spirocuta</taxon>
        <taxon>Euglenophyceae</taxon>
        <taxon>Euglenales</taxon>
        <taxon>Euglenaceae</taxon>
        <taxon>Euglena</taxon>
    </lineage>
</organism>
<reference key="1">
    <citation type="journal article" date="1990" name="Curr. Genet.">
        <title>Genes for ribosomal proteins are retained on the 73 kb DNA from Astasia longa that resembles Euglena chloroplast DNA.</title>
        <authorList>
            <person name="Siemeister G."/>
            <person name="Buchholz C."/>
            <person name="Hachtel W."/>
        </authorList>
    </citation>
    <scope>NUCLEOTIDE SEQUENCE [GENOMIC DNA]</scope>
    <source>
        <strain>CCAP 1204-17a</strain>
    </source>
</reference>
<reference key="2">
    <citation type="journal article" date="1994" name="Plant Physiol.">
        <title>Plastid ribosomal protein genes from the nonphotosynthetic flagellate Astasia longa.</title>
        <authorList>
            <person name="Gockel G."/>
            <person name="Baier S."/>
            <person name="Hachtel W."/>
        </authorList>
    </citation>
    <scope>NUCLEOTIDE SEQUENCE [GENOMIC DNA]</scope>
    <source>
        <strain>CCAP 1204-17a</strain>
    </source>
</reference>
<reference key="3">
    <citation type="journal article" date="2000" name="Protist">
        <title>Complete gene map of the plastid genome of the nonphotosynthetic euglenoid flagellate Astasia longa.</title>
        <authorList>
            <person name="Gockel G."/>
            <person name="Hachtel W."/>
        </authorList>
    </citation>
    <scope>NUCLEOTIDE SEQUENCE [LARGE SCALE GENOMIC DNA]</scope>
    <source>
        <strain>CCAP 1204-17a</strain>
    </source>
</reference>
<sequence length="37" mass="4389">MKVYSSVRKICKSCGLIRRHGKLFVRCINSKHNQRQN</sequence>
<feature type="chain" id="PRO_0000126311" description="Large ribosomal subunit protein bL36c">
    <location>
        <begin position="1"/>
        <end position="37"/>
    </location>
</feature>
<protein>
    <recommendedName>
        <fullName evidence="1">Large ribosomal subunit protein bL36c</fullName>
    </recommendedName>
    <alternativeName>
        <fullName>50S ribosomal protein L36, plastid</fullName>
    </alternativeName>
</protein>
<geneLocation type="non-photosynthetic plastid"/>
<accession>P24355</accession>
<proteinExistence type="inferred from homology"/>
<gene>
    <name type="primary">rpl36</name>
</gene>